<keyword id="KW-0002">3D-structure</keyword>
<keyword id="KW-0963">Cytoplasm</keyword>
<keyword id="KW-0217">Developmental protein</keyword>
<keyword id="KW-0221">Differentiation</keyword>
<keyword id="KW-0896">Oogenesis</keyword>
<keyword id="KW-0597">Phosphoprotein</keyword>
<keyword id="KW-1185">Reference proteome</keyword>
<keyword id="KW-0694">RNA-binding</keyword>
<keyword id="KW-0744">Spermatogenesis</keyword>
<keyword id="KW-0810">Translation regulation</keyword>
<reference key="1">
    <citation type="journal article" date="1996" name="Mamm. Genome">
        <title>Isolation of a mouse homolog of the human DAZ (Deleted in Azoospermia) gene.</title>
        <authorList>
            <person name="Maiwald R."/>
            <person name="Luche R.M."/>
            <person name="Epstein C.J."/>
        </authorList>
    </citation>
    <scope>NUCLEOTIDE SEQUENCE [MRNA]</scope>
    <source>
        <strain>CD-1</strain>
        <tissue>Testis</tissue>
    </source>
</reference>
<reference key="2">
    <citation type="journal article" date="1996" name="Hum. Mol. Genet.">
        <title>A murine homologue of the human DAZ gene is autosomal and expressed only in male and female gonads.</title>
        <authorList>
            <person name="Cooke H.J."/>
            <person name="Lee M."/>
            <person name="Kerr S."/>
            <person name="Ruggiu M."/>
        </authorList>
    </citation>
    <scope>NUCLEOTIDE SEQUENCE [MRNA]</scope>
    <source>
        <tissue>Testis</tissue>
    </source>
</reference>
<reference key="3">
    <citation type="journal article" date="1996" name="Genomics">
        <title>Mouse autosomal homolog of DAZ, a candidate male sterility gene in humans, is expressed in male germ cells before and after puberty.</title>
        <authorList>
            <person name="Reijo R.A."/>
            <person name="Seligman J."/>
            <person name="Dinulos M.B."/>
            <person name="Jaffe T."/>
            <person name="Brown L.G."/>
            <person name="Disteche C.M."/>
            <person name="Page D.C."/>
        </authorList>
    </citation>
    <scope>NUCLEOTIDE SEQUENCE [MRNA]</scope>
    <source>
        <strain>BALB/cJ</strain>
        <tissue>Testis</tissue>
    </source>
</reference>
<reference key="4">
    <citation type="journal article" date="2005" name="Science">
        <title>The transcriptional landscape of the mammalian genome.</title>
        <authorList>
            <person name="Carninci P."/>
            <person name="Kasukawa T."/>
            <person name="Katayama S."/>
            <person name="Gough J."/>
            <person name="Frith M.C."/>
            <person name="Maeda N."/>
            <person name="Oyama R."/>
            <person name="Ravasi T."/>
            <person name="Lenhard B."/>
            <person name="Wells C."/>
            <person name="Kodzius R."/>
            <person name="Shimokawa K."/>
            <person name="Bajic V.B."/>
            <person name="Brenner S.E."/>
            <person name="Batalov S."/>
            <person name="Forrest A.R."/>
            <person name="Zavolan M."/>
            <person name="Davis M.J."/>
            <person name="Wilming L.G."/>
            <person name="Aidinis V."/>
            <person name="Allen J.E."/>
            <person name="Ambesi-Impiombato A."/>
            <person name="Apweiler R."/>
            <person name="Aturaliya R.N."/>
            <person name="Bailey T.L."/>
            <person name="Bansal M."/>
            <person name="Baxter L."/>
            <person name="Beisel K.W."/>
            <person name="Bersano T."/>
            <person name="Bono H."/>
            <person name="Chalk A.M."/>
            <person name="Chiu K.P."/>
            <person name="Choudhary V."/>
            <person name="Christoffels A."/>
            <person name="Clutterbuck D.R."/>
            <person name="Crowe M.L."/>
            <person name="Dalla E."/>
            <person name="Dalrymple B.P."/>
            <person name="de Bono B."/>
            <person name="Della Gatta G."/>
            <person name="di Bernardo D."/>
            <person name="Down T."/>
            <person name="Engstrom P."/>
            <person name="Fagiolini M."/>
            <person name="Faulkner G."/>
            <person name="Fletcher C.F."/>
            <person name="Fukushima T."/>
            <person name="Furuno M."/>
            <person name="Futaki S."/>
            <person name="Gariboldi M."/>
            <person name="Georgii-Hemming P."/>
            <person name="Gingeras T.R."/>
            <person name="Gojobori T."/>
            <person name="Green R.E."/>
            <person name="Gustincich S."/>
            <person name="Harbers M."/>
            <person name="Hayashi Y."/>
            <person name="Hensch T.K."/>
            <person name="Hirokawa N."/>
            <person name="Hill D."/>
            <person name="Huminiecki L."/>
            <person name="Iacono M."/>
            <person name="Ikeo K."/>
            <person name="Iwama A."/>
            <person name="Ishikawa T."/>
            <person name="Jakt M."/>
            <person name="Kanapin A."/>
            <person name="Katoh M."/>
            <person name="Kawasawa Y."/>
            <person name="Kelso J."/>
            <person name="Kitamura H."/>
            <person name="Kitano H."/>
            <person name="Kollias G."/>
            <person name="Krishnan S.P."/>
            <person name="Kruger A."/>
            <person name="Kummerfeld S.K."/>
            <person name="Kurochkin I.V."/>
            <person name="Lareau L.F."/>
            <person name="Lazarevic D."/>
            <person name="Lipovich L."/>
            <person name="Liu J."/>
            <person name="Liuni S."/>
            <person name="McWilliam S."/>
            <person name="Madan Babu M."/>
            <person name="Madera M."/>
            <person name="Marchionni L."/>
            <person name="Matsuda H."/>
            <person name="Matsuzawa S."/>
            <person name="Miki H."/>
            <person name="Mignone F."/>
            <person name="Miyake S."/>
            <person name="Morris K."/>
            <person name="Mottagui-Tabar S."/>
            <person name="Mulder N."/>
            <person name="Nakano N."/>
            <person name="Nakauchi H."/>
            <person name="Ng P."/>
            <person name="Nilsson R."/>
            <person name="Nishiguchi S."/>
            <person name="Nishikawa S."/>
            <person name="Nori F."/>
            <person name="Ohara O."/>
            <person name="Okazaki Y."/>
            <person name="Orlando V."/>
            <person name="Pang K.C."/>
            <person name="Pavan W.J."/>
            <person name="Pavesi G."/>
            <person name="Pesole G."/>
            <person name="Petrovsky N."/>
            <person name="Piazza S."/>
            <person name="Reed J."/>
            <person name="Reid J.F."/>
            <person name="Ring B.Z."/>
            <person name="Ringwald M."/>
            <person name="Rost B."/>
            <person name="Ruan Y."/>
            <person name="Salzberg S.L."/>
            <person name="Sandelin A."/>
            <person name="Schneider C."/>
            <person name="Schoenbach C."/>
            <person name="Sekiguchi K."/>
            <person name="Semple C.A."/>
            <person name="Seno S."/>
            <person name="Sessa L."/>
            <person name="Sheng Y."/>
            <person name="Shibata Y."/>
            <person name="Shimada H."/>
            <person name="Shimada K."/>
            <person name="Silva D."/>
            <person name="Sinclair B."/>
            <person name="Sperling S."/>
            <person name="Stupka E."/>
            <person name="Sugiura K."/>
            <person name="Sultana R."/>
            <person name="Takenaka Y."/>
            <person name="Taki K."/>
            <person name="Tammoja K."/>
            <person name="Tan S.L."/>
            <person name="Tang S."/>
            <person name="Taylor M.S."/>
            <person name="Tegner J."/>
            <person name="Teichmann S.A."/>
            <person name="Ueda H.R."/>
            <person name="van Nimwegen E."/>
            <person name="Verardo R."/>
            <person name="Wei C.L."/>
            <person name="Yagi K."/>
            <person name="Yamanishi H."/>
            <person name="Zabarovsky E."/>
            <person name="Zhu S."/>
            <person name="Zimmer A."/>
            <person name="Hide W."/>
            <person name="Bult C."/>
            <person name="Grimmond S.M."/>
            <person name="Teasdale R.D."/>
            <person name="Liu E.T."/>
            <person name="Brusic V."/>
            <person name="Quackenbush J."/>
            <person name="Wahlestedt C."/>
            <person name="Mattick J.S."/>
            <person name="Hume D.A."/>
            <person name="Kai C."/>
            <person name="Sasaki D."/>
            <person name="Tomaru Y."/>
            <person name="Fukuda S."/>
            <person name="Kanamori-Katayama M."/>
            <person name="Suzuki M."/>
            <person name="Aoki J."/>
            <person name="Arakawa T."/>
            <person name="Iida J."/>
            <person name="Imamura K."/>
            <person name="Itoh M."/>
            <person name="Kato T."/>
            <person name="Kawaji H."/>
            <person name="Kawagashira N."/>
            <person name="Kawashima T."/>
            <person name="Kojima M."/>
            <person name="Kondo S."/>
            <person name="Konno H."/>
            <person name="Nakano K."/>
            <person name="Ninomiya N."/>
            <person name="Nishio T."/>
            <person name="Okada M."/>
            <person name="Plessy C."/>
            <person name="Shibata K."/>
            <person name="Shiraki T."/>
            <person name="Suzuki S."/>
            <person name="Tagami M."/>
            <person name="Waki K."/>
            <person name="Watahiki A."/>
            <person name="Okamura-Oho Y."/>
            <person name="Suzuki H."/>
            <person name="Kawai J."/>
            <person name="Hayashizaki Y."/>
        </authorList>
    </citation>
    <scope>NUCLEOTIDE SEQUENCE [LARGE SCALE MRNA]</scope>
    <source>
        <strain>C57BL/6J</strain>
        <tissue>Testis</tissue>
    </source>
</reference>
<reference key="5">
    <citation type="journal article" date="1997" name="Nature">
        <title>The mouse Dazla gene encodes a cytoplasmic protein essential for gametogenesis.</title>
        <authorList>
            <person name="Ruggiu M."/>
            <person name="Speed R."/>
            <person name="Taggart M."/>
            <person name="McKay S.J."/>
            <person name="Kilanowski F."/>
            <person name="Saunders P.T.K."/>
            <person name="Dorin J."/>
            <person name="Cooke H.J."/>
        </authorList>
    </citation>
    <scope>FUNCTION</scope>
    <scope>SUBCELLULAR LOCATION</scope>
    <scope>TISSUE SPECIFICITY</scope>
</reference>
<reference key="6">
    <citation type="journal article" date="2000" name="Gene">
        <title>In vivo and in vitro analysis of homodimerisation activity of the mouse Dazl1 protein.</title>
        <authorList>
            <person name="Ruggiu M."/>
            <person name="Cooke H.J."/>
        </authorList>
    </citation>
    <scope>HOMODIMERIZATION</scope>
    <scope>INTERACTION WITH DAZ</scope>
</reference>
<reference key="7">
    <citation type="journal article" date="2001" name="Nucleic Acids Res.">
        <title>The RNA-binding specificity of the mouse Dazl protein.</title>
        <authorList>
            <person name="Venables J.P."/>
            <person name="Ruggiu M."/>
            <person name="Cooke H.J."/>
        </authorList>
    </citation>
    <scope>RNA-BINDING</scope>
    <scope>MUTAGENESIS OF PHE-43; TYR-82; PHE-84 AND PHE-87</scope>
</reference>
<reference key="8">
    <citation type="journal article" date="2004" name="Rapid Commun. Mass Spectrom.">
        <title>Phosphoproteome analysis of mouse liver using immobilized metal affinity purification and linear ion trap mass spectrometry.</title>
        <authorList>
            <person name="Jin W.-H."/>
            <person name="Dai J."/>
            <person name="Zhou H."/>
            <person name="Xia Q.-C."/>
            <person name="Zou H.-F."/>
            <person name="Zeng R."/>
        </authorList>
    </citation>
    <scope>PHOSPHORYLATION AT TYR-276</scope>
</reference>
<reference key="9">
    <citation type="journal article" date="2010" name="Cell">
        <title>A tissue-specific atlas of mouse protein phosphorylation and expression.</title>
        <authorList>
            <person name="Huttlin E.L."/>
            <person name="Jedrychowski M.P."/>
            <person name="Elias J.E."/>
            <person name="Goswami T."/>
            <person name="Rad R."/>
            <person name="Beausoleil S.A."/>
            <person name="Villen J."/>
            <person name="Haas W."/>
            <person name="Sowa M.E."/>
            <person name="Gygi S.P."/>
        </authorList>
    </citation>
    <scope>IDENTIFICATION BY MASS SPECTROMETRY [LARGE SCALE ANALYSIS]</scope>
    <source>
        <tissue>Testis</tissue>
    </source>
</reference>
<reference key="10">
    <citation type="journal article" date="2011" name="Proc. Natl. Acad. Sci. U.S.A.">
        <title>Kinked beta-strands mediate high-affinity recognition of mRNA targets by the germ-cell regulator DAZL.</title>
        <authorList>
            <person name="Jenkins H.T."/>
            <person name="Malkova B."/>
            <person name="Edwards T.A."/>
        </authorList>
    </citation>
    <scope>X-RAY CRYSTALLOGRAPHY (1.35 ANGSTROMS) OF 32-132 ALONE AND IN COMPLEX WITH RNA</scope>
    <scope>FUNCTION</scope>
    <scope>SUBUNIT</scope>
</reference>
<feature type="chain" id="PRO_0000081561" description="Deleted in azoospermia-like">
    <location>
        <begin position="1"/>
        <end position="298"/>
    </location>
</feature>
<feature type="domain" description="RRM" evidence="2">
    <location>
        <begin position="40"/>
        <end position="115"/>
    </location>
</feature>
<feature type="domain" description="DAZ" evidence="3">
    <location>
        <begin position="167"/>
        <end position="190"/>
    </location>
</feature>
<feature type="region of interest" description="Disordered" evidence="4">
    <location>
        <begin position="1"/>
        <end position="27"/>
    </location>
</feature>
<feature type="region of interest" description="Homodimerization">
    <location>
        <begin position="80"/>
        <end position="132"/>
    </location>
</feature>
<feature type="compositionally biased region" description="Low complexity" evidence="4">
    <location>
        <begin position="11"/>
        <end position="27"/>
    </location>
</feature>
<feature type="modified residue" description="Phosphotyrosine" evidence="7">
    <location>
        <position position="276"/>
    </location>
</feature>
<feature type="mutagenesis site" description="Abolishes RNA-binding but not homodimerization; when associated with D-82; D-84 and D-87." evidence="6">
    <original>F</original>
    <variation>D</variation>
    <location>
        <position position="43"/>
    </location>
</feature>
<feature type="mutagenesis site" description="Abolishes RNA-binding but not homodimerization; when associated with D-43; D-84 and D-87." evidence="6">
    <original>Y</original>
    <variation>D</variation>
    <location>
        <position position="82"/>
    </location>
</feature>
<feature type="mutagenesis site" description="Abolishes RNA-binding but not homodimerization; when associated with D-43; D-82 and D-87." evidence="6">
    <original>F</original>
    <variation>D</variation>
    <location>
        <position position="84"/>
    </location>
</feature>
<feature type="mutagenesis site" description="Abolishes RNA-binding but not homodimerization; when associated with D-43; D-82 and D-84." evidence="6">
    <original>F</original>
    <variation>D</variation>
    <location>
        <position position="87"/>
    </location>
</feature>
<feature type="strand" evidence="10">
    <location>
        <begin position="36"/>
        <end position="45"/>
    </location>
</feature>
<feature type="helix" evidence="10">
    <location>
        <begin position="53"/>
        <end position="60"/>
    </location>
</feature>
<feature type="helix" evidence="10">
    <location>
        <begin position="61"/>
        <end position="63"/>
    </location>
</feature>
<feature type="strand" evidence="10">
    <location>
        <begin position="66"/>
        <end position="73"/>
    </location>
</feature>
<feature type="strand" evidence="10">
    <location>
        <begin position="79"/>
        <end position="89"/>
    </location>
</feature>
<feature type="helix" evidence="10">
    <location>
        <begin position="93"/>
        <end position="96"/>
    </location>
</feature>
<feature type="strand" evidence="11">
    <location>
        <begin position="102"/>
        <end position="107"/>
    </location>
</feature>
<feature type="strand" evidence="10">
    <location>
        <begin position="109"/>
        <end position="115"/>
    </location>
</feature>
<accession>Q64368</accession>
<dbReference type="EMBL" id="X95724">
    <property type="protein sequence ID" value="CAA65039.1"/>
    <property type="molecule type" value="mRNA"/>
</dbReference>
<dbReference type="EMBL" id="U38690">
    <property type="protein sequence ID" value="AAB46608.1"/>
    <property type="molecule type" value="mRNA"/>
</dbReference>
<dbReference type="EMBL" id="U46694">
    <property type="protein sequence ID" value="AAC52711.1"/>
    <property type="molecule type" value="mRNA"/>
</dbReference>
<dbReference type="EMBL" id="AK014854">
    <property type="protein sequence ID" value="BAB29585.1"/>
    <property type="molecule type" value="mRNA"/>
</dbReference>
<dbReference type="EMBL" id="AK033183">
    <property type="protein sequence ID" value="BAC28187.1"/>
    <property type="molecule type" value="mRNA"/>
</dbReference>
<dbReference type="CCDS" id="CCDS37649.1"/>
<dbReference type="RefSeq" id="NP_001264792.1">
    <property type="nucleotide sequence ID" value="NM_001277863.1"/>
</dbReference>
<dbReference type="RefSeq" id="NP_034151.3">
    <property type="nucleotide sequence ID" value="NM_010021.5"/>
</dbReference>
<dbReference type="PDB" id="2XS2">
    <property type="method" value="X-ray"/>
    <property type="resolution" value="1.35 A"/>
    <property type="chains" value="A=32-132"/>
</dbReference>
<dbReference type="PDB" id="2XS5">
    <property type="method" value="X-ray"/>
    <property type="resolution" value="1.60 A"/>
    <property type="chains" value="A/B=32-117"/>
</dbReference>
<dbReference type="PDB" id="2XS7">
    <property type="method" value="X-ray"/>
    <property type="resolution" value="1.45 A"/>
    <property type="chains" value="A=32-117"/>
</dbReference>
<dbReference type="PDB" id="2XSF">
    <property type="method" value="X-ray"/>
    <property type="resolution" value="1.70 A"/>
    <property type="chains" value="A=35-118"/>
</dbReference>
<dbReference type="PDBsum" id="2XS2"/>
<dbReference type="PDBsum" id="2XS5"/>
<dbReference type="PDBsum" id="2XS7"/>
<dbReference type="PDBsum" id="2XSF"/>
<dbReference type="SMR" id="Q64368"/>
<dbReference type="BioGRID" id="199055">
    <property type="interactions" value="1"/>
</dbReference>
<dbReference type="FunCoup" id="Q64368">
    <property type="interactions" value="498"/>
</dbReference>
<dbReference type="IntAct" id="Q64368">
    <property type="interactions" value="6"/>
</dbReference>
<dbReference type="MINT" id="Q64368"/>
<dbReference type="STRING" id="10090.ENSMUSP00000010736"/>
<dbReference type="GlyGen" id="Q64368">
    <property type="glycosylation" value="2 sites, 1 O-linked glycan (2 sites)"/>
</dbReference>
<dbReference type="iPTMnet" id="Q64368"/>
<dbReference type="PhosphoSitePlus" id="Q64368"/>
<dbReference type="PaxDb" id="10090-ENSMUSP00000010736"/>
<dbReference type="ProteomicsDB" id="277946"/>
<dbReference type="DNASU" id="13164"/>
<dbReference type="Ensembl" id="ENSMUST00000010736.9">
    <property type="protein sequence ID" value="ENSMUSP00000010736.8"/>
    <property type="gene ID" value="ENSMUSG00000010592.10"/>
</dbReference>
<dbReference type="GeneID" id="13164"/>
<dbReference type="KEGG" id="mmu:13164"/>
<dbReference type="UCSC" id="uc008cyu.3">
    <property type="organism name" value="mouse"/>
</dbReference>
<dbReference type="AGR" id="MGI:1342328"/>
<dbReference type="CTD" id="1618"/>
<dbReference type="MGI" id="MGI:1342328">
    <property type="gene designation" value="Dazl"/>
</dbReference>
<dbReference type="VEuPathDB" id="HostDB:ENSMUSG00000010592"/>
<dbReference type="eggNOG" id="KOG0118">
    <property type="taxonomic scope" value="Eukaryota"/>
</dbReference>
<dbReference type="GeneTree" id="ENSGT00530000063480"/>
<dbReference type="HOGENOM" id="CLU_084802_0_0_1"/>
<dbReference type="InParanoid" id="Q64368"/>
<dbReference type="OMA" id="SQEDYFK"/>
<dbReference type="OrthoDB" id="762982at2759"/>
<dbReference type="PhylomeDB" id="Q64368"/>
<dbReference type="TreeFam" id="TF324396"/>
<dbReference type="BioGRID-ORCS" id="13164">
    <property type="hits" value="3 hits in 79 CRISPR screens"/>
</dbReference>
<dbReference type="EvolutionaryTrace" id="Q64368"/>
<dbReference type="PRO" id="PR:Q64368"/>
<dbReference type="Proteomes" id="UP000000589">
    <property type="component" value="Chromosome 17"/>
</dbReference>
<dbReference type="RNAct" id="Q64368">
    <property type="molecule type" value="protein"/>
</dbReference>
<dbReference type="Bgee" id="ENSMUSG00000010592">
    <property type="expression patterns" value="Expressed in spermatocyte and 57 other cell types or tissues"/>
</dbReference>
<dbReference type="ExpressionAtlas" id="Q64368">
    <property type="expression patterns" value="baseline and differential"/>
</dbReference>
<dbReference type="GO" id="GO:0005737">
    <property type="term" value="C:cytoplasm"/>
    <property type="evidence" value="ECO:0000314"/>
    <property type="project" value="UniProtKB"/>
</dbReference>
<dbReference type="GO" id="GO:0005634">
    <property type="term" value="C:nucleus"/>
    <property type="evidence" value="ECO:0000314"/>
    <property type="project" value="UniProtKB"/>
</dbReference>
<dbReference type="GO" id="GO:0032991">
    <property type="term" value="C:protein-containing complex"/>
    <property type="evidence" value="ECO:0007669"/>
    <property type="project" value="Ensembl"/>
</dbReference>
<dbReference type="GO" id="GO:0005840">
    <property type="term" value="C:ribosome"/>
    <property type="evidence" value="ECO:0000314"/>
    <property type="project" value="MGI"/>
</dbReference>
<dbReference type="GO" id="GO:0042802">
    <property type="term" value="F:identical protein binding"/>
    <property type="evidence" value="ECO:0000353"/>
    <property type="project" value="IntAct"/>
</dbReference>
<dbReference type="GO" id="GO:0003730">
    <property type="term" value="F:mRNA 3'-UTR binding"/>
    <property type="evidence" value="ECO:0000314"/>
    <property type="project" value="MGI"/>
</dbReference>
<dbReference type="GO" id="GO:0008494">
    <property type="term" value="F:translation activator activity"/>
    <property type="evidence" value="ECO:0000314"/>
    <property type="project" value="UniProtKB"/>
</dbReference>
<dbReference type="GO" id="GO:0007147">
    <property type="term" value="P:female meiosis II"/>
    <property type="evidence" value="ECO:0000315"/>
    <property type="project" value="MGI"/>
</dbReference>
<dbReference type="GO" id="GO:0007281">
    <property type="term" value="P:germ cell development"/>
    <property type="evidence" value="ECO:0000315"/>
    <property type="project" value="MGI"/>
</dbReference>
<dbReference type="GO" id="GO:0001556">
    <property type="term" value="P:oocyte maturation"/>
    <property type="evidence" value="ECO:0000315"/>
    <property type="project" value="MGI"/>
</dbReference>
<dbReference type="GO" id="GO:0045836">
    <property type="term" value="P:positive regulation of meiotic nuclear division"/>
    <property type="evidence" value="ECO:0000315"/>
    <property type="project" value="MGI"/>
</dbReference>
<dbReference type="GO" id="GO:0045948">
    <property type="term" value="P:positive regulation of translational initiation"/>
    <property type="evidence" value="ECO:0000314"/>
    <property type="project" value="UniProtKB"/>
</dbReference>
<dbReference type="GO" id="GO:0007283">
    <property type="term" value="P:spermatogenesis"/>
    <property type="evidence" value="ECO:0007669"/>
    <property type="project" value="UniProtKB-KW"/>
</dbReference>
<dbReference type="CDD" id="cd12672">
    <property type="entry name" value="RRM_DAZL"/>
    <property type="match status" value="1"/>
</dbReference>
<dbReference type="FunFam" id="3.30.70.330:FF:000180">
    <property type="entry name" value="Deleted in azoospermia-like"/>
    <property type="match status" value="1"/>
</dbReference>
<dbReference type="Gene3D" id="3.30.70.330">
    <property type="match status" value="1"/>
</dbReference>
<dbReference type="InterPro" id="IPR043628">
    <property type="entry name" value="DAZ_dom"/>
</dbReference>
<dbReference type="InterPro" id="IPR037551">
    <property type="entry name" value="DAZ_RRM_vert"/>
</dbReference>
<dbReference type="InterPro" id="IPR012677">
    <property type="entry name" value="Nucleotide-bd_a/b_plait_sf"/>
</dbReference>
<dbReference type="InterPro" id="IPR035979">
    <property type="entry name" value="RBD_domain_sf"/>
</dbReference>
<dbReference type="InterPro" id="IPR000504">
    <property type="entry name" value="RRM_dom"/>
</dbReference>
<dbReference type="PANTHER" id="PTHR11176">
    <property type="entry name" value="BOULE-RELATED"/>
    <property type="match status" value="1"/>
</dbReference>
<dbReference type="PANTHER" id="PTHR11176:SF4">
    <property type="entry name" value="DELETED IN AZOOSPERMIA-LIKE"/>
    <property type="match status" value="1"/>
</dbReference>
<dbReference type="Pfam" id="PF18872">
    <property type="entry name" value="Daz"/>
    <property type="match status" value="1"/>
</dbReference>
<dbReference type="Pfam" id="PF00076">
    <property type="entry name" value="RRM_1"/>
    <property type="match status" value="1"/>
</dbReference>
<dbReference type="SMART" id="SM00360">
    <property type="entry name" value="RRM"/>
    <property type="match status" value="1"/>
</dbReference>
<dbReference type="SUPFAM" id="SSF54928">
    <property type="entry name" value="RNA-binding domain, RBD"/>
    <property type="match status" value="1"/>
</dbReference>
<dbReference type="PROSITE" id="PS51890">
    <property type="entry name" value="DAZ"/>
    <property type="match status" value="1"/>
</dbReference>
<dbReference type="PROSITE" id="PS50102">
    <property type="entry name" value="RRM"/>
    <property type="match status" value="1"/>
</dbReference>
<gene>
    <name type="primary">Dazl</name>
    <name type="synonym">Dazl1</name>
    <name type="synonym">Dazla</name>
</gene>
<organism>
    <name type="scientific">Mus musculus</name>
    <name type="common">Mouse</name>
    <dbReference type="NCBI Taxonomy" id="10090"/>
    <lineage>
        <taxon>Eukaryota</taxon>
        <taxon>Metazoa</taxon>
        <taxon>Chordata</taxon>
        <taxon>Craniata</taxon>
        <taxon>Vertebrata</taxon>
        <taxon>Euteleostomi</taxon>
        <taxon>Mammalia</taxon>
        <taxon>Eutheria</taxon>
        <taxon>Euarchontoglires</taxon>
        <taxon>Glires</taxon>
        <taxon>Rodentia</taxon>
        <taxon>Myomorpha</taxon>
        <taxon>Muroidea</taxon>
        <taxon>Muridae</taxon>
        <taxon>Murinae</taxon>
        <taxon>Mus</taxon>
        <taxon>Mus</taxon>
    </lineage>
</organism>
<protein>
    <recommendedName>
        <fullName>Deleted in azoospermia-like</fullName>
    </recommendedName>
    <alternativeName>
        <fullName>DAZ-like autosomal</fullName>
    </alternativeName>
    <alternativeName>
        <fullName>Deleted in azoospermia-like 1</fullName>
    </alternativeName>
</protein>
<evidence type="ECO:0000250" key="1"/>
<evidence type="ECO:0000255" key="2">
    <source>
        <dbReference type="PROSITE-ProRule" id="PRU00176"/>
    </source>
</evidence>
<evidence type="ECO:0000255" key="3">
    <source>
        <dbReference type="PROSITE-ProRule" id="PRU01238"/>
    </source>
</evidence>
<evidence type="ECO:0000256" key="4">
    <source>
        <dbReference type="SAM" id="MobiDB-lite"/>
    </source>
</evidence>
<evidence type="ECO:0000269" key="5">
    <source>
    </source>
</evidence>
<evidence type="ECO:0000269" key="6">
    <source>
    </source>
</evidence>
<evidence type="ECO:0000269" key="7">
    <source>
    </source>
</evidence>
<evidence type="ECO:0000269" key="8">
    <source>
    </source>
</evidence>
<evidence type="ECO:0000269" key="9">
    <source>
    </source>
</evidence>
<evidence type="ECO:0007829" key="10">
    <source>
        <dbReference type="PDB" id="2XS2"/>
    </source>
</evidence>
<evidence type="ECO:0007829" key="11">
    <source>
        <dbReference type="PDB" id="2XS7"/>
    </source>
</evidence>
<comment type="function">
    <text evidence="8 9">RNA-binding protein, which is essential for gametogenesis in both males and females. Plays a central role during spermatogenesis. Acts by binding to the 3'-UTR of mRNA, specifically recognizing GUU triplets, and thereby regulating the translation of key transcripts.</text>
</comment>
<comment type="subunit">
    <text evidence="1 5 8">Homodimer and heterodimer. Forms a heterodimer with DAZ. Interacts with BOLL, DAZAP1 and DAZAP2. Interacts with PUM2 (By similarity). Multiple DAZL RRMs can bind to a single RNA containing multiple GUU triplets.</text>
</comment>
<comment type="interaction">
    <interactant intactId="EBI-2024439">
        <id>Q64368</id>
    </interactant>
    <interactant intactId="EBI-2024439">
        <id>Q64368</id>
        <label>Dazl</label>
    </interactant>
    <organismsDiffer>false</organismsDiffer>
    <experiments>2</experiments>
</comment>
<comment type="interaction">
    <interactant intactId="EBI-2024439">
        <id>Q64368</id>
    </interactant>
    <interactant intactId="EBI-492834">
        <id>O88485</id>
        <label>Dync1i1</label>
    </interactant>
    <organismsDiffer>false</organismsDiffer>
    <experiments>4</experiments>
</comment>
<comment type="interaction">
    <interactant intactId="EBI-2024439">
        <id>Q64368</id>
    </interactant>
    <interactant intactId="EBI-349121">
        <id>P63168</id>
        <label>Dynll1</label>
    </interactant>
    <organismsDiffer>false</organismsDiffer>
    <experiments>12</experiments>
</comment>
<comment type="subcellular location">
    <subcellularLocation>
        <location evidence="9">Cytoplasm</location>
    </subcellularLocation>
</comment>
<comment type="tissue specificity">
    <text evidence="9">Expressed predominantly in testis with lower levels in ovary. In testis, it is expressed in pachytene spermatocytes and at lower level in type-B spermatogonia, preleptotene and zygotene spermatocytes. In ovary, it is expressed in maturing follicles. In embryonic and prepuberal ovary, it is expressed in the oocyte and follicular cells.</text>
</comment>
<comment type="developmental stage">
    <text>In the testis, expression increases steadily after birth until the first spermatogonial cells appear, levels off as the first spermatogenic cells enter meiosis (10 days after birth) and remains at this level thereafter.</text>
</comment>
<comment type="domain">
    <text evidence="1">The DAZ domain mediates the interaction with DAZAP1 and DAZAP2.</text>
</comment>
<comment type="similarity">
    <text evidence="3">Belongs to the RRM DAZ family.</text>
</comment>
<proteinExistence type="evidence at protein level"/>
<sequence length="298" mass="33313">MSATTSEAPNSAVSREASTQSSSATTSQGYVLPEGKIMPNTVFVGGIDVRMDETEIRSFFARYGSVKEVKIITDRTGVSKGYGFVSFYNDVDVQKIVESQINFHGKKLKLGPAIRKQNLCTYHVQPRPLIFNPPPPPQFQSVWSSPNAETYMQPPTMMNPITQYVQAYPPYPSSPVQVITGYQLPVYNYQMPPQWPAGEQRSYVIPPAYTTVNYHCSEVDPGADILPNECSVHDAAPASGNGPQKKSVDRSIQTVVSCLFNPENRLRNSLVTQDDYFKDKRVHHFRRSRAVLKSDHLC</sequence>
<name>DAZL_MOUSE</name>